<feature type="chain" id="PRO_0000383336" description="Transcription initiation factor IIA large subunit">
    <location>
        <begin position="1"/>
        <end position="157"/>
    </location>
</feature>
<accession>Q8SW23</accession>
<evidence type="ECO:0000250" key="1"/>
<evidence type="ECO:0000269" key="2">
    <source>
    </source>
</evidence>
<evidence type="ECO:0000305" key="3"/>
<keyword id="KW-0539">Nucleus</keyword>
<keyword id="KW-1185">Reference proteome</keyword>
<keyword id="KW-0804">Transcription</keyword>
<proteinExistence type="evidence at protein level"/>
<gene>
    <name type="primary">TOA1</name>
    <name type="ordered locus">ECU03_1070</name>
</gene>
<name>TOA1_ENCCU</name>
<organism>
    <name type="scientific">Encephalitozoon cuniculi (strain GB-M1)</name>
    <name type="common">Microsporidian parasite</name>
    <dbReference type="NCBI Taxonomy" id="284813"/>
    <lineage>
        <taxon>Eukaryota</taxon>
        <taxon>Fungi</taxon>
        <taxon>Fungi incertae sedis</taxon>
        <taxon>Microsporidia</taxon>
        <taxon>Unikaryonidae</taxon>
        <taxon>Encephalitozoon</taxon>
    </lineage>
</organism>
<sequence>MLKIYEDIINEVISRLEQVEDEVSIGKSAIHELRNEWRERLIEYTQSEWDGERMRRRDGEQGYHGYERLSEGPAHAFGGKPTTAKDPGMFEDYGSSDVSSGDSEIIGTKGSTGNCMVCLYVKVNMSKGKWKCTFKQGFISIGNIDFVFNSAQGELEW</sequence>
<protein>
    <recommendedName>
        <fullName>Transcription initiation factor IIA large subunit</fullName>
        <shortName>TFIIA large subunit</shortName>
    </recommendedName>
</protein>
<comment type="function">
    <text evidence="1">TFIIA is a component of the transcription machinery of RNA polymerase II and plays an important role in transcriptional activation.</text>
</comment>
<comment type="subunit">
    <text evidence="1">TFIIA is a heterodimer of the large subunit and the small subunit gamma.</text>
</comment>
<comment type="subcellular location">
    <subcellularLocation>
        <location evidence="1">Nucleus</location>
    </subcellularLocation>
</comment>
<comment type="developmental stage">
    <text evidence="2">Expressed in late sporogonial stages.</text>
</comment>
<comment type="similarity">
    <text evidence="3">Belongs to the TFIIA subunit 1 family.</text>
</comment>
<reference key="1">
    <citation type="journal article" date="2001" name="Nature">
        <title>Genome sequence and gene compaction of the eukaryote parasite Encephalitozoon cuniculi.</title>
        <authorList>
            <person name="Katinka M.D."/>
            <person name="Duprat S."/>
            <person name="Cornillot E."/>
            <person name="Metenier G."/>
            <person name="Thomarat F."/>
            <person name="Prensier G."/>
            <person name="Barbe V."/>
            <person name="Peyretaillade E."/>
            <person name="Brottier P."/>
            <person name="Wincker P."/>
            <person name="Delbac F."/>
            <person name="El Alaoui H."/>
            <person name="Peyret P."/>
            <person name="Saurin W."/>
            <person name="Gouy M."/>
            <person name="Weissenbach J."/>
            <person name="Vivares C.P."/>
        </authorList>
    </citation>
    <scope>NUCLEOTIDE SEQUENCE [LARGE SCALE GENOMIC DNA]</scope>
    <source>
        <strain>GB-M1</strain>
    </source>
</reference>
<reference key="2">
    <citation type="journal article" date="2006" name="Proteomics">
        <title>Proteomic analysis of the eukaryotic parasite Encephalitozoon cuniculi (microsporidia): a reference map for proteins expressed in late sporogonial stages.</title>
        <authorList>
            <person name="Brosson D."/>
            <person name="Kuhn L."/>
            <person name="Delbac F."/>
            <person name="Garin J."/>
            <person name="Vivares C.P."/>
            <person name="Texier C."/>
        </authorList>
    </citation>
    <scope>IDENTIFICATION BY MASS SPECTROMETRY [LARGE SCALE ANALYSIS]</scope>
    <scope>DEVELOPMENTAL STAGE</scope>
    <scope>SUBCELLULAR LOCATION</scope>
</reference>
<dbReference type="EMBL" id="AL590443">
    <property type="protein sequence ID" value="CAD26251.1"/>
    <property type="molecule type" value="Genomic_DNA"/>
</dbReference>
<dbReference type="RefSeq" id="NP_597616.1">
    <property type="nucleotide sequence ID" value="NM_001040980.1"/>
</dbReference>
<dbReference type="SMR" id="Q8SW23"/>
<dbReference type="STRING" id="284813.Q8SW23"/>
<dbReference type="GeneID" id="858778"/>
<dbReference type="KEGG" id="ecu:ECU03_1070"/>
<dbReference type="VEuPathDB" id="MicrosporidiaDB:ECU03_1070"/>
<dbReference type="HOGENOM" id="CLU_030027_2_1_1"/>
<dbReference type="InParanoid" id="Q8SW23"/>
<dbReference type="OMA" id="TWIAKIC"/>
<dbReference type="OrthoDB" id="6275927at2759"/>
<dbReference type="Proteomes" id="UP000000819">
    <property type="component" value="Chromosome III"/>
</dbReference>
<dbReference type="GO" id="GO:0005672">
    <property type="term" value="C:transcription factor TFIIA complex"/>
    <property type="evidence" value="ECO:0007669"/>
    <property type="project" value="InterPro"/>
</dbReference>
<dbReference type="GO" id="GO:0006367">
    <property type="term" value="P:transcription initiation at RNA polymerase II promoter"/>
    <property type="evidence" value="ECO:0007669"/>
    <property type="project" value="InterPro"/>
</dbReference>
<dbReference type="CDD" id="cd07976">
    <property type="entry name" value="TFIIA_alpha_beta_like"/>
    <property type="match status" value="1"/>
</dbReference>
<dbReference type="Gene3D" id="1.10.287.100">
    <property type="match status" value="1"/>
</dbReference>
<dbReference type="Gene3D" id="2.30.18.10">
    <property type="entry name" value="Transcription factor IIA (TFIIA), beta-barrel domain"/>
    <property type="match status" value="1"/>
</dbReference>
<dbReference type="InterPro" id="IPR004855">
    <property type="entry name" value="TFIIA_asu/bsu"/>
</dbReference>
<dbReference type="InterPro" id="IPR009088">
    <property type="entry name" value="TFIIA_b-brl"/>
</dbReference>
<dbReference type="PANTHER" id="PTHR12694">
    <property type="entry name" value="TRANSCRIPTION INITIATION FACTOR IIA SUBUNIT 1"/>
    <property type="match status" value="1"/>
</dbReference>
<dbReference type="PANTHER" id="PTHR12694:SF8">
    <property type="entry name" value="TRANSCRIPTION INITIATION FACTOR IIA SUBUNIT 1"/>
    <property type="match status" value="1"/>
</dbReference>
<dbReference type="Pfam" id="PF03153">
    <property type="entry name" value="TFIIA"/>
    <property type="match status" value="1"/>
</dbReference>
<dbReference type="SUPFAM" id="SSF50784">
    <property type="entry name" value="Transcription factor IIA (TFIIA), beta-barrel domain"/>
    <property type="match status" value="1"/>
</dbReference>